<accession>O22243</accession>
<accession>C0SV94</accession>
<evidence type="ECO:0000255" key="1">
    <source>
        <dbReference type="PROSITE-ProRule" id="PRU00541"/>
    </source>
</evidence>
<evidence type="ECO:0000255" key="2">
    <source>
        <dbReference type="PROSITE-ProRule" id="PRU00542"/>
    </source>
</evidence>
<evidence type="ECO:0000255" key="3">
    <source>
        <dbReference type="PROSITE-ProRule" id="PRU00723"/>
    </source>
</evidence>
<evidence type="ECO:0000305" key="4"/>
<gene>
    <name type="ordered locus">At2g47680</name>
    <name type="ORF">F17A22.7</name>
</gene>
<dbReference type="EC" id="3.6.4.13"/>
<dbReference type="EC" id="3.6.4.12"/>
<dbReference type="EMBL" id="AC005309">
    <property type="protein sequence ID" value="AAC63624.1"/>
    <property type="molecule type" value="Genomic_DNA"/>
</dbReference>
<dbReference type="EMBL" id="CP002685">
    <property type="protein sequence ID" value="AEC10875.1"/>
    <property type="molecule type" value="Genomic_DNA"/>
</dbReference>
<dbReference type="EMBL" id="AB493597">
    <property type="protein sequence ID" value="BAH30435.1"/>
    <property type="molecule type" value="mRNA"/>
</dbReference>
<dbReference type="PIR" id="C84918">
    <property type="entry name" value="C84918"/>
</dbReference>
<dbReference type="PIR" id="T00416">
    <property type="entry name" value="T00416"/>
</dbReference>
<dbReference type="RefSeq" id="NP_182290.1">
    <property type="nucleotide sequence ID" value="NM_130336.3"/>
</dbReference>
<dbReference type="SMR" id="O22243"/>
<dbReference type="FunCoup" id="O22243">
    <property type="interactions" value="149"/>
</dbReference>
<dbReference type="STRING" id="3702.O22243"/>
<dbReference type="PaxDb" id="3702-AT2G47680.1"/>
<dbReference type="ProteomicsDB" id="240559"/>
<dbReference type="EnsemblPlants" id="AT2G47680.1">
    <property type="protein sequence ID" value="AT2G47680.1"/>
    <property type="gene ID" value="AT2G47680"/>
</dbReference>
<dbReference type="GeneID" id="819381"/>
<dbReference type="Gramene" id="AT2G47680.1">
    <property type="protein sequence ID" value="AT2G47680.1"/>
    <property type="gene ID" value="AT2G47680"/>
</dbReference>
<dbReference type="KEGG" id="ath:AT2G47680"/>
<dbReference type="Araport" id="AT2G47680"/>
<dbReference type="TAIR" id="AT2G47680"/>
<dbReference type="eggNOG" id="KOG0920">
    <property type="taxonomic scope" value="Eukaryota"/>
</dbReference>
<dbReference type="HOGENOM" id="CLU_007384_0_0_1"/>
<dbReference type="InParanoid" id="O22243"/>
<dbReference type="OMA" id="INPPMYL"/>
<dbReference type="PhylomeDB" id="O22243"/>
<dbReference type="PRO" id="PR:O22243"/>
<dbReference type="Proteomes" id="UP000006548">
    <property type="component" value="Chromosome 2"/>
</dbReference>
<dbReference type="ExpressionAtlas" id="O22243">
    <property type="expression patterns" value="baseline and differential"/>
</dbReference>
<dbReference type="GO" id="GO:0005524">
    <property type="term" value="F:ATP binding"/>
    <property type="evidence" value="ECO:0007669"/>
    <property type="project" value="UniProtKB-KW"/>
</dbReference>
<dbReference type="GO" id="GO:0016887">
    <property type="term" value="F:ATP hydrolysis activity"/>
    <property type="evidence" value="ECO:0007669"/>
    <property type="project" value="RHEA"/>
</dbReference>
<dbReference type="GO" id="GO:0003677">
    <property type="term" value="F:DNA binding"/>
    <property type="evidence" value="ECO:0007669"/>
    <property type="project" value="UniProtKB-KW"/>
</dbReference>
<dbReference type="GO" id="GO:0003729">
    <property type="term" value="F:mRNA binding"/>
    <property type="evidence" value="ECO:0000314"/>
    <property type="project" value="TAIR"/>
</dbReference>
<dbReference type="GO" id="GO:0003724">
    <property type="term" value="F:RNA helicase activity"/>
    <property type="evidence" value="ECO:0007669"/>
    <property type="project" value="UniProtKB-EC"/>
</dbReference>
<dbReference type="GO" id="GO:0008270">
    <property type="term" value="F:zinc ion binding"/>
    <property type="evidence" value="ECO:0007669"/>
    <property type="project" value="UniProtKB-KW"/>
</dbReference>
<dbReference type="CDD" id="cd17917">
    <property type="entry name" value="DEXHc_RHA-like"/>
    <property type="match status" value="1"/>
</dbReference>
<dbReference type="CDD" id="cd18791">
    <property type="entry name" value="SF2_C_RHA"/>
    <property type="match status" value="1"/>
</dbReference>
<dbReference type="FunFam" id="3.40.50.300:FF:001477">
    <property type="entry name" value="Zinc finger helicase family protein"/>
    <property type="match status" value="1"/>
</dbReference>
<dbReference type="Gene3D" id="1.20.120.1080">
    <property type="match status" value="1"/>
</dbReference>
<dbReference type="Gene3D" id="3.40.50.300">
    <property type="entry name" value="P-loop containing nucleotide triphosphate hydrolases"/>
    <property type="match status" value="2"/>
</dbReference>
<dbReference type="Gene3D" id="4.10.1000.10">
    <property type="entry name" value="Zinc finger, CCCH-type"/>
    <property type="match status" value="1"/>
</dbReference>
<dbReference type="InterPro" id="IPR011545">
    <property type="entry name" value="DEAD/DEAH_box_helicase_dom"/>
</dbReference>
<dbReference type="InterPro" id="IPR014001">
    <property type="entry name" value="Helicase_ATP-bd"/>
</dbReference>
<dbReference type="InterPro" id="IPR001650">
    <property type="entry name" value="Helicase_C-like"/>
</dbReference>
<dbReference type="InterPro" id="IPR027417">
    <property type="entry name" value="P-loop_NTPase"/>
</dbReference>
<dbReference type="InterPro" id="IPR000571">
    <property type="entry name" value="Znf_CCCH"/>
</dbReference>
<dbReference type="InterPro" id="IPR036855">
    <property type="entry name" value="Znf_CCCH_sf"/>
</dbReference>
<dbReference type="PANTHER" id="PTHR18934">
    <property type="entry name" value="ATP-DEPENDENT RNA HELICASE"/>
    <property type="match status" value="1"/>
</dbReference>
<dbReference type="PANTHER" id="PTHR18934:SF221">
    <property type="entry name" value="ATP-DEPENDENT RNA HELICASE DHX34-RELATED"/>
    <property type="match status" value="1"/>
</dbReference>
<dbReference type="Pfam" id="PF00270">
    <property type="entry name" value="DEAD"/>
    <property type="match status" value="1"/>
</dbReference>
<dbReference type="Pfam" id="PF00271">
    <property type="entry name" value="Helicase_C"/>
    <property type="match status" value="1"/>
</dbReference>
<dbReference type="SMART" id="SM00487">
    <property type="entry name" value="DEXDc"/>
    <property type="match status" value="1"/>
</dbReference>
<dbReference type="SMART" id="SM00490">
    <property type="entry name" value="HELICc"/>
    <property type="match status" value="1"/>
</dbReference>
<dbReference type="SMART" id="SM00356">
    <property type="entry name" value="ZnF_C3H1"/>
    <property type="match status" value="2"/>
</dbReference>
<dbReference type="SUPFAM" id="SSF90229">
    <property type="entry name" value="CCCH zinc finger"/>
    <property type="match status" value="1"/>
</dbReference>
<dbReference type="SUPFAM" id="SSF52540">
    <property type="entry name" value="P-loop containing nucleoside triphosphate hydrolases"/>
    <property type="match status" value="1"/>
</dbReference>
<dbReference type="PROSITE" id="PS51192">
    <property type="entry name" value="HELICASE_ATP_BIND_1"/>
    <property type="match status" value="1"/>
</dbReference>
<dbReference type="PROSITE" id="PS51194">
    <property type="entry name" value="HELICASE_CTER"/>
    <property type="match status" value="1"/>
</dbReference>
<dbReference type="PROSITE" id="PS50103">
    <property type="entry name" value="ZF_C3H1"/>
    <property type="match status" value="2"/>
</dbReference>
<comment type="catalytic activity">
    <reaction>
        <text>ATP + H2O = ADP + phosphate + H(+)</text>
        <dbReference type="Rhea" id="RHEA:13065"/>
        <dbReference type="ChEBI" id="CHEBI:15377"/>
        <dbReference type="ChEBI" id="CHEBI:15378"/>
        <dbReference type="ChEBI" id="CHEBI:30616"/>
        <dbReference type="ChEBI" id="CHEBI:43474"/>
        <dbReference type="ChEBI" id="CHEBI:456216"/>
        <dbReference type="EC" id="3.6.4.13"/>
    </reaction>
</comment>
<comment type="catalytic activity">
    <reaction>
        <text>ATP + H2O = ADP + phosphate + H(+)</text>
        <dbReference type="Rhea" id="RHEA:13065"/>
        <dbReference type="ChEBI" id="CHEBI:15377"/>
        <dbReference type="ChEBI" id="CHEBI:15378"/>
        <dbReference type="ChEBI" id="CHEBI:30616"/>
        <dbReference type="ChEBI" id="CHEBI:43474"/>
        <dbReference type="ChEBI" id="CHEBI:456216"/>
        <dbReference type="EC" id="3.6.4.12"/>
    </reaction>
</comment>
<comment type="similarity">
    <text evidence="4">Belongs to the DExH box helicase family.</text>
</comment>
<organism>
    <name type="scientific">Arabidopsis thaliana</name>
    <name type="common">Mouse-ear cress</name>
    <dbReference type="NCBI Taxonomy" id="3702"/>
    <lineage>
        <taxon>Eukaryota</taxon>
        <taxon>Viridiplantae</taxon>
        <taxon>Streptophyta</taxon>
        <taxon>Embryophyta</taxon>
        <taxon>Tracheophyta</taxon>
        <taxon>Spermatophyta</taxon>
        <taxon>Magnoliopsida</taxon>
        <taxon>eudicotyledons</taxon>
        <taxon>Gunneridae</taxon>
        <taxon>Pentapetalae</taxon>
        <taxon>rosids</taxon>
        <taxon>malvids</taxon>
        <taxon>Brassicales</taxon>
        <taxon>Brassicaceae</taxon>
        <taxon>Camelineae</taxon>
        <taxon>Arabidopsis</taxon>
    </lineage>
</organism>
<proteinExistence type="evidence at transcript level"/>
<protein>
    <recommendedName>
        <fullName evidence="4">DExH-box ATP-dependent RNA helicase DExH8</fullName>
        <ecNumber>3.6.4.13</ecNumber>
    </recommendedName>
    <alternativeName>
        <fullName>Zinc finger CCCH domain-containing protein 31</fullName>
        <shortName>AtC3H31</shortName>
        <ecNumber>3.6.4.12</ecNumber>
    </alternativeName>
</protein>
<reference key="1">
    <citation type="journal article" date="1999" name="Nature">
        <title>Sequence and analysis of chromosome 2 of the plant Arabidopsis thaliana.</title>
        <authorList>
            <person name="Lin X."/>
            <person name="Kaul S."/>
            <person name="Rounsley S.D."/>
            <person name="Shea T.P."/>
            <person name="Benito M.-I."/>
            <person name="Town C.D."/>
            <person name="Fujii C.Y."/>
            <person name="Mason T.M."/>
            <person name="Bowman C.L."/>
            <person name="Barnstead M.E."/>
            <person name="Feldblyum T.V."/>
            <person name="Buell C.R."/>
            <person name="Ketchum K.A."/>
            <person name="Lee J.J."/>
            <person name="Ronning C.M."/>
            <person name="Koo H.L."/>
            <person name="Moffat K.S."/>
            <person name="Cronin L.A."/>
            <person name="Shen M."/>
            <person name="Pai G."/>
            <person name="Van Aken S."/>
            <person name="Umayam L."/>
            <person name="Tallon L.J."/>
            <person name="Gill J.E."/>
            <person name="Adams M.D."/>
            <person name="Carrera A.J."/>
            <person name="Creasy T.H."/>
            <person name="Goodman H.M."/>
            <person name="Somerville C.R."/>
            <person name="Copenhaver G.P."/>
            <person name="Preuss D."/>
            <person name="Nierman W.C."/>
            <person name="White O."/>
            <person name="Eisen J.A."/>
            <person name="Salzberg S.L."/>
            <person name="Fraser C.M."/>
            <person name="Venter J.C."/>
        </authorList>
    </citation>
    <scope>NUCLEOTIDE SEQUENCE [LARGE SCALE GENOMIC DNA]</scope>
    <source>
        <strain>cv. Columbia</strain>
    </source>
</reference>
<reference key="2">
    <citation type="journal article" date="2017" name="Plant J.">
        <title>Araport11: a complete reannotation of the Arabidopsis thaliana reference genome.</title>
        <authorList>
            <person name="Cheng C.Y."/>
            <person name="Krishnakumar V."/>
            <person name="Chan A.P."/>
            <person name="Thibaud-Nissen F."/>
            <person name="Schobel S."/>
            <person name="Town C.D."/>
        </authorList>
    </citation>
    <scope>GENOME REANNOTATION</scope>
    <source>
        <strain>cv. Columbia</strain>
    </source>
</reference>
<reference key="3">
    <citation type="submission" date="2009-03" db="EMBL/GenBank/DDBJ databases">
        <title>ORF cloning and analysis of Arabidopsis transcription factor genes.</title>
        <authorList>
            <person name="Fujita M."/>
            <person name="Mizukado S."/>
            <person name="Seki M."/>
            <person name="Shinozaki K."/>
            <person name="Mitsuda N."/>
            <person name="Takiguchi Y."/>
            <person name="Takagi M."/>
        </authorList>
    </citation>
    <scope>NUCLEOTIDE SEQUENCE [LARGE SCALE MRNA]</scope>
</reference>
<reference key="4">
    <citation type="journal article" date="2008" name="BMC Genomics">
        <title>Genome-wide analysis of CCCH zinc finger family in Arabidopsis and rice.</title>
        <authorList>
            <person name="Wang D."/>
            <person name="Guo Y."/>
            <person name="Wu C."/>
            <person name="Yang G."/>
            <person name="Li Y."/>
            <person name="Zheng C."/>
        </authorList>
    </citation>
    <scope>NOMENCLATURE</scope>
</reference>
<reference key="5">
    <citation type="journal article" date="2013" name="PLoS ONE">
        <title>Genome-wide comparative in silico analysis of the RNA helicase gene family in Zea mays and Glycine max: a comparison with Arabidopsis and Oryza sativa.</title>
        <authorList>
            <person name="Xu R."/>
            <person name="Zhang S."/>
            <person name="Huang J."/>
            <person name="Zheng C."/>
        </authorList>
    </citation>
    <scope>GENE FAMILY</scope>
</reference>
<keyword id="KW-0067">ATP-binding</keyword>
<keyword id="KW-0238">DNA-binding</keyword>
<keyword id="KW-0347">Helicase</keyword>
<keyword id="KW-0378">Hydrolase</keyword>
<keyword id="KW-0479">Metal-binding</keyword>
<keyword id="KW-0547">Nucleotide-binding</keyword>
<keyword id="KW-1185">Reference proteome</keyword>
<keyword id="KW-0677">Repeat</keyword>
<keyword id="KW-0694">RNA-binding</keyword>
<keyword id="KW-0862">Zinc</keyword>
<keyword id="KW-0863">Zinc-finger</keyword>
<sequence>MAVSSPTSSSSSSESLPLPSSNFASLPIMAMKRRIIDKILENRVTLIVGEPGCGKSSQVPQFLLEANMAPILCTQPRRFAVVAVAKMVAKSRNSDLGGEIGYHIGHSKILTEGSKILFKTAGVLLDEMLDKGLNALKYKVIILDEVHERSVESDLVLVCVKQFLMKNNDLRVVLMSATADITRYRDYFKELGRGERVEVVAIPSPDQRTIFQRRVLYLEQVAGLLGVSSDLSAYCPGPSPSSADTEIKPELQNLIHDLILYIHEKEPDIEKSILVFLPTYYSLEQQYHQLEPFFASFEVHILHRSIDTEQALAAMKICRSRRKVILATNIAESSVTIPKVAYVIDSCRSLQVFWDPSRKRDAVQLVWVSRSQAEQRRGRTGRTCDGEVYRLVPSAFFNKLEEHEPPSILKLSLRQQVLHICCTESRAINDANALLAKAMDPPDPDVVDDALRMLLSIQALRKSPRGRYEPTFYGRLLASFPLSFDASILVVKFGEMGMLRQGILLGVLMDTLPLPIHHPFGDDSLFLEYVDHYFGGSKTISGGRREMVLMANFCAFQFWQRVFKDKHRLENLKQLLSKEKDKDLKLMFPEIEKEWCDFHNIAQSSFYHVSELYEDTLSSFHRFRPQFISSSDSQPTYYNPYEFDHTCYIECQPSEDKYLHSEDVDNNQPPPEVRKCVSVPFVPPNAFQANAIAENMASIIKEIRTQCTPSESDNGHGALEPEDYVEYGEAPVCVYFLNGYCNRGGQCTFTHTLQSTRPACKFFASSQGCRNGESCLFSHAMRRRTTSYLPPPQCLPEEDGSSTSPLLDLFPTSSEGCILVFDDSDMHFTSSIANRYPSWRILSTSSSSETLFCDSSLADTRIFWGLNHPYQTIISKAGRENPIPWNEVKCVLWFLNPDSYADTPEKQKTILQNFFEHMAIRLLGDKLYKIRVVLTMNNVRFSLLQVEKLARESFFFLGESFPHDSESFGAFQDTLTIQKPMLVSRPISYVFNLHPPSDIQFGNYTSLLRKSLHNK</sequence>
<name>C3H31_ARATH</name>
<feature type="chain" id="PRO_0000371989" description="DExH-box ATP-dependent RNA helicase DExH8">
    <location>
        <begin position="1"/>
        <end position="1015"/>
    </location>
</feature>
<feature type="domain" description="Helicase ATP-binding" evidence="1">
    <location>
        <begin position="36"/>
        <end position="197"/>
    </location>
</feature>
<feature type="domain" description="Helicase C-terminal" evidence="2">
    <location>
        <begin position="254"/>
        <end position="419"/>
    </location>
</feature>
<feature type="zinc finger region" description="C3H1-type 1" evidence="3">
    <location>
        <begin position="727"/>
        <end position="753"/>
    </location>
</feature>
<feature type="zinc finger region" description="C3H1-type 2" evidence="3">
    <location>
        <begin position="754"/>
        <end position="782"/>
    </location>
</feature>
<feature type="short sequence motif" description="DEVH box" evidence="4">
    <location>
        <begin position="144"/>
        <end position="147"/>
    </location>
</feature>
<feature type="binding site" evidence="1">
    <location>
        <begin position="49"/>
        <end position="56"/>
    </location>
    <ligand>
        <name>ATP</name>
        <dbReference type="ChEBI" id="CHEBI:30616"/>
    </ligand>
</feature>